<gene>
    <name evidence="1" type="primary">der</name>
    <name type="synonym">engA</name>
    <name type="ordered locus">Moth_1322</name>
</gene>
<dbReference type="EMBL" id="CP000232">
    <property type="protein sequence ID" value="ABC19635.1"/>
    <property type="molecule type" value="Genomic_DNA"/>
</dbReference>
<dbReference type="RefSeq" id="YP_430178.1">
    <property type="nucleotide sequence ID" value="NC_007644.1"/>
</dbReference>
<dbReference type="SMR" id="Q2RIV4"/>
<dbReference type="STRING" id="264732.Moth_1322"/>
<dbReference type="EnsemblBacteria" id="ABC19635">
    <property type="protein sequence ID" value="ABC19635"/>
    <property type="gene ID" value="Moth_1322"/>
</dbReference>
<dbReference type="KEGG" id="mta:Moth_1322"/>
<dbReference type="PATRIC" id="fig|264732.11.peg.1420"/>
<dbReference type="eggNOG" id="COG1160">
    <property type="taxonomic scope" value="Bacteria"/>
</dbReference>
<dbReference type="HOGENOM" id="CLU_016077_6_2_9"/>
<dbReference type="OrthoDB" id="9805918at2"/>
<dbReference type="GO" id="GO:0016887">
    <property type="term" value="F:ATP hydrolysis activity"/>
    <property type="evidence" value="ECO:0007669"/>
    <property type="project" value="InterPro"/>
</dbReference>
<dbReference type="GO" id="GO:0005525">
    <property type="term" value="F:GTP binding"/>
    <property type="evidence" value="ECO:0007669"/>
    <property type="project" value="UniProtKB-UniRule"/>
</dbReference>
<dbReference type="GO" id="GO:0043022">
    <property type="term" value="F:ribosome binding"/>
    <property type="evidence" value="ECO:0007669"/>
    <property type="project" value="TreeGrafter"/>
</dbReference>
<dbReference type="GO" id="GO:0042254">
    <property type="term" value="P:ribosome biogenesis"/>
    <property type="evidence" value="ECO:0007669"/>
    <property type="project" value="UniProtKB-KW"/>
</dbReference>
<dbReference type="CDD" id="cd01894">
    <property type="entry name" value="EngA1"/>
    <property type="match status" value="1"/>
</dbReference>
<dbReference type="CDD" id="cd01895">
    <property type="entry name" value="EngA2"/>
    <property type="match status" value="1"/>
</dbReference>
<dbReference type="FunFam" id="3.30.300.20:FF:000004">
    <property type="entry name" value="GTPase Der"/>
    <property type="match status" value="1"/>
</dbReference>
<dbReference type="FunFam" id="3.40.50.300:FF:000040">
    <property type="entry name" value="GTPase Der"/>
    <property type="match status" value="1"/>
</dbReference>
<dbReference type="FunFam" id="3.40.50.300:FF:000057">
    <property type="entry name" value="GTPase Der"/>
    <property type="match status" value="1"/>
</dbReference>
<dbReference type="Gene3D" id="3.30.300.20">
    <property type="match status" value="1"/>
</dbReference>
<dbReference type="Gene3D" id="3.40.50.300">
    <property type="entry name" value="P-loop containing nucleotide triphosphate hydrolases"/>
    <property type="match status" value="2"/>
</dbReference>
<dbReference type="HAMAP" id="MF_00195">
    <property type="entry name" value="GTPase_Der"/>
    <property type="match status" value="1"/>
</dbReference>
<dbReference type="InterPro" id="IPR003593">
    <property type="entry name" value="AAA+_ATPase"/>
</dbReference>
<dbReference type="InterPro" id="IPR031166">
    <property type="entry name" value="G_ENGA"/>
</dbReference>
<dbReference type="InterPro" id="IPR006073">
    <property type="entry name" value="GTP-bd"/>
</dbReference>
<dbReference type="InterPro" id="IPR016484">
    <property type="entry name" value="GTPase_Der"/>
</dbReference>
<dbReference type="InterPro" id="IPR032859">
    <property type="entry name" value="KH_dom-like"/>
</dbReference>
<dbReference type="InterPro" id="IPR015946">
    <property type="entry name" value="KH_dom-like_a/b"/>
</dbReference>
<dbReference type="InterPro" id="IPR027417">
    <property type="entry name" value="P-loop_NTPase"/>
</dbReference>
<dbReference type="InterPro" id="IPR005225">
    <property type="entry name" value="Small_GTP-bd"/>
</dbReference>
<dbReference type="NCBIfam" id="TIGR03594">
    <property type="entry name" value="GTPase_EngA"/>
    <property type="match status" value="1"/>
</dbReference>
<dbReference type="NCBIfam" id="TIGR00231">
    <property type="entry name" value="small_GTP"/>
    <property type="match status" value="2"/>
</dbReference>
<dbReference type="PANTHER" id="PTHR43834">
    <property type="entry name" value="GTPASE DER"/>
    <property type="match status" value="1"/>
</dbReference>
<dbReference type="PANTHER" id="PTHR43834:SF6">
    <property type="entry name" value="GTPASE DER"/>
    <property type="match status" value="1"/>
</dbReference>
<dbReference type="Pfam" id="PF14714">
    <property type="entry name" value="KH_dom-like"/>
    <property type="match status" value="1"/>
</dbReference>
<dbReference type="Pfam" id="PF01926">
    <property type="entry name" value="MMR_HSR1"/>
    <property type="match status" value="2"/>
</dbReference>
<dbReference type="PIRSF" id="PIRSF006485">
    <property type="entry name" value="GTP-binding_EngA"/>
    <property type="match status" value="1"/>
</dbReference>
<dbReference type="PRINTS" id="PR00326">
    <property type="entry name" value="GTP1OBG"/>
</dbReference>
<dbReference type="SMART" id="SM00382">
    <property type="entry name" value="AAA"/>
    <property type="match status" value="2"/>
</dbReference>
<dbReference type="SUPFAM" id="SSF52540">
    <property type="entry name" value="P-loop containing nucleoside triphosphate hydrolases"/>
    <property type="match status" value="2"/>
</dbReference>
<dbReference type="PROSITE" id="PS51712">
    <property type="entry name" value="G_ENGA"/>
    <property type="match status" value="2"/>
</dbReference>
<proteinExistence type="inferred from homology"/>
<keyword id="KW-0342">GTP-binding</keyword>
<keyword id="KW-0547">Nucleotide-binding</keyword>
<keyword id="KW-0677">Repeat</keyword>
<keyword id="KW-0690">Ribosome biogenesis</keyword>
<sequence length="438" mass="48617">MPKPIVAIIGRPNVGKSTLFNRITGGRVAIVEDTPGVTRDRLYRDAEWCGRQFTLVDTGGIATHQDDPLVARVRSQAEQALKEADVIIFLVDSRTGITADDEEIAALLRRSDRPVILVANKVEDFSDPTVTHEFYRLGLGDPVPISAAHGLNTGDLLDRVVELLPAVPAGEEGDALKVAIVGRPNVGKSSLVNRLLGEERVIVSDLPGTTRDAVDTYIRRGEREYILIDTAGMRRKSRITVPTERYSVLRALRAVERADVVLVILDGTEGVTEQDKKIAGYGHEKGKATIIVVNKWDLVPKDERTMDHYREAVRQELSFMAYAPVLFISALTGQRVDQVLMTIDAVGEAANRRVATGTLNAVVREAVLLTPPPSVKGQEVKIYYATQVKVKPPTFVFFTNRPEGVHFSYQRYLENQLRQAFGFEGTPIRLIFRRGRER</sequence>
<protein>
    <recommendedName>
        <fullName evidence="1">GTPase Der</fullName>
    </recommendedName>
    <alternativeName>
        <fullName evidence="1">GTP-binding protein EngA</fullName>
    </alternativeName>
</protein>
<evidence type="ECO:0000255" key="1">
    <source>
        <dbReference type="HAMAP-Rule" id="MF_00195"/>
    </source>
</evidence>
<comment type="function">
    <text evidence="1">GTPase that plays an essential role in the late steps of ribosome biogenesis.</text>
</comment>
<comment type="subunit">
    <text evidence="1">Associates with the 50S ribosomal subunit.</text>
</comment>
<comment type="similarity">
    <text evidence="1">Belongs to the TRAFAC class TrmE-Era-EngA-EngB-Septin-like GTPase superfamily. EngA (Der) GTPase family.</text>
</comment>
<feature type="chain" id="PRO_1000011666" description="GTPase Der">
    <location>
        <begin position="1"/>
        <end position="438"/>
    </location>
</feature>
<feature type="domain" description="EngA-type G 1">
    <location>
        <begin position="4"/>
        <end position="168"/>
    </location>
</feature>
<feature type="domain" description="EngA-type G 2">
    <location>
        <begin position="176"/>
        <end position="351"/>
    </location>
</feature>
<feature type="domain" description="KH-like" evidence="1">
    <location>
        <begin position="352"/>
        <end position="436"/>
    </location>
</feature>
<feature type="binding site" evidence="1">
    <location>
        <begin position="10"/>
        <end position="17"/>
    </location>
    <ligand>
        <name>GTP</name>
        <dbReference type="ChEBI" id="CHEBI:37565"/>
        <label>1</label>
    </ligand>
</feature>
<feature type="binding site" evidence="1">
    <location>
        <begin position="57"/>
        <end position="61"/>
    </location>
    <ligand>
        <name>GTP</name>
        <dbReference type="ChEBI" id="CHEBI:37565"/>
        <label>1</label>
    </ligand>
</feature>
<feature type="binding site" evidence="1">
    <location>
        <begin position="120"/>
        <end position="123"/>
    </location>
    <ligand>
        <name>GTP</name>
        <dbReference type="ChEBI" id="CHEBI:37565"/>
        <label>1</label>
    </ligand>
</feature>
<feature type="binding site" evidence="1">
    <location>
        <begin position="182"/>
        <end position="189"/>
    </location>
    <ligand>
        <name>GTP</name>
        <dbReference type="ChEBI" id="CHEBI:37565"/>
        <label>2</label>
    </ligand>
</feature>
<feature type="binding site" evidence="1">
    <location>
        <begin position="229"/>
        <end position="233"/>
    </location>
    <ligand>
        <name>GTP</name>
        <dbReference type="ChEBI" id="CHEBI:37565"/>
        <label>2</label>
    </ligand>
</feature>
<feature type="binding site" evidence="1">
    <location>
        <begin position="294"/>
        <end position="297"/>
    </location>
    <ligand>
        <name>GTP</name>
        <dbReference type="ChEBI" id="CHEBI:37565"/>
        <label>2</label>
    </ligand>
</feature>
<reference key="1">
    <citation type="journal article" date="2008" name="Environ. Microbiol.">
        <title>The complete genome sequence of Moorella thermoacetica (f. Clostridium thermoaceticum).</title>
        <authorList>
            <person name="Pierce E."/>
            <person name="Xie G."/>
            <person name="Barabote R.D."/>
            <person name="Saunders E."/>
            <person name="Han C.S."/>
            <person name="Detter J.C."/>
            <person name="Richardson P."/>
            <person name="Brettin T.S."/>
            <person name="Das A."/>
            <person name="Ljungdahl L.G."/>
            <person name="Ragsdale S.W."/>
        </authorList>
    </citation>
    <scope>NUCLEOTIDE SEQUENCE [LARGE SCALE GENOMIC DNA]</scope>
    <source>
        <strain>ATCC 39073 / JCM 9320</strain>
    </source>
</reference>
<organism>
    <name type="scientific">Moorella thermoacetica (strain ATCC 39073 / JCM 9320)</name>
    <dbReference type="NCBI Taxonomy" id="264732"/>
    <lineage>
        <taxon>Bacteria</taxon>
        <taxon>Bacillati</taxon>
        <taxon>Bacillota</taxon>
        <taxon>Clostridia</taxon>
        <taxon>Moorellales</taxon>
        <taxon>Moorellaceae</taxon>
        <taxon>Moorella</taxon>
    </lineage>
</organism>
<name>DER_MOOTA</name>
<accession>Q2RIV4</accession>